<name>AMPA_MYCSJ</name>
<protein>
    <recommendedName>
        <fullName evidence="1">Probable cytosol aminopeptidase</fullName>
        <ecNumber evidence="1">3.4.11.1</ecNumber>
    </recommendedName>
    <alternativeName>
        <fullName evidence="1">Leucine aminopeptidase</fullName>
        <shortName evidence="1">LAP</shortName>
        <ecNumber evidence="1">3.4.11.10</ecNumber>
    </alternativeName>
    <alternativeName>
        <fullName evidence="1">Leucyl aminopeptidase</fullName>
    </alternativeName>
</protein>
<accession>A3Q1S2</accession>
<proteinExistence type="inferred from homology"/>
<reference key="1">
    <citation type="submission" date="2007-02" db="EMBL/GenBank/DDBJ databases">
        <title>Complete sequence of Mycobacterium sp. JLS.</title>
        <authorList>
            <consortium name="US DOE Joint Genome Institute"/>
            <person name="Copeland A."/>
            <person name="Lucas S."/>
            <person name="Lapidus A."/>
            <person name="Barry K."/>
            <person name="Detter J.C."/>
            <person name="Glavina del Rio T."/>
            <person name="Hammon N."/>
            <person name="Israni S."/>
            <person name="Dalin E."/>
            <person name="Tice H."/>
            <person name="Pitluck S."/>
            <person name="Chain P."/>
            <person name="Malfatti S."/>
            <person name="Shin M."/>
            <person name="Vergez L."/>
            <person name="Schmutz J."/>
            <person name="Larimer F."/>
            <person name="Land M."/>
            <person name="Hauser L."/>
            <person name="Kyrpides N."/>
            <person name="Mikhailova N."/>
            <person name="Miller C.D."/>
            <person name="Anderson A.J."/>
            <person name="Sims R.C."/>
            <person name="Richardson P."/>
        </authorList>
    </citation>
    <scope>NUCLEOTIDE SEQUENCE [LARGE SCALE GENOMIC DNA]</scope>
    <source>
        <strain>JLS</strain>
    </source>
</reference>
<sequence>MSSDPGYQAPVVTVSSSIPRRGVGDSVLIVPVVTRDDAAAVLAAAPFLDKDAVREIEAALKSLGATGGEGQTHRLVVSALPVASVLTIGLGKERDEWPADTVRRVAGNAARSLDKVAAVLTTLSALDLEAAIEGLILGSYRFTEFRSAKTAPKDGGLRAITALSQESKSRARDAAQRATDIATAVATARDFVNTPPSHLHPDEFAKRAKALGEAAGLEVEILDDKALVKAGYGGIVGVGKGSSRPPRLVRLSHKGAVRTRTRGARTGGSKRVALVGKGITFDTGGISIKPAANMHHMTSDMGGAAAVIATVVLAAKQKLPIDVIATVPMAENMPSATAQRPGDVLTQYGGTTVEVLNTDAEGRLILADAIVRACEDNPDYLIETSTLTGAQTVALGSRTPGVMGSDAFRDRVATLSQQVGENAWAMPLPEELKDDLKSTVADLANVSGSRFAGMLVAGTYLREFVADGVEWAHIDVAAPAYNSGGPWGYTPKGGTGVPTRTMFAVLEEIAREG</sequence>
<feature type="chain" id="PRO_1000019937" description="Probable cytosol aminopeptidase">
    <location>
        <begin position="1"/>
        <end position="513"/>
    </location>
</feature>
<feature type="active site" evidence="1">
    <location>
        <position position="289"/>
    </location>
</feature>
<feature type="active site" evidence="1">
    <location>
        <position position="363"/>
    </location>
</feature>
<feature type="binding site" evidence="1">
    <location>
        <position position="277"/>
    </location>
    <ligand>
        <name>Mn(2+)</name>
        <dbReference type="ChEBI" id="CHEBI:29035"/>
        <label>2</label>
    </ligand>
</feature>
<feature type="binding site" evidence="1">
    <location>
        <position position="282"/>
    </location>
    <ligand>
        <name>Mn(2+)</name>
        <dbReference type="ChEBI" id="CHEBI:29035"/>
        <label>1</label>
    </ligand>
</feature>
<feature type="binding site" evidence="1">
    <location>
        <position position="282"/>
    </location>
    <ligand>
        <name>Mn(2+)</name>
        <dbReference type="ChEBI" id="CHEBI:29035"/>
        <label>2</label>
    </ligand>
</feature>
<feature type="binding site" evidence="1">
    <location>
        <position position="300"/>
    </location>
    <ligand>
        <name>Mn(2+)</name>
        <dbReference type="ChEBI" id="CHEBI:29035"/>
        <label>2</label>
    </ligand>
</feature>
<feature type="binding site" evidence="1">
    <location>
        <position position="359"/>
    </location>
    <ligand>
        <name>Mn(2+)</name>
        <dbReference type="ChEBI" id="CHEBI:29035"/>
        <label>1</label>
    </ligand>
</feature>
<feature type="binding site" evidence="1">
    <location>
        <position position="361"/>
    </location>
    <ligand>
        <name>Mn(2+)</name>
        <dbReference type="ChEBI" id="CHEBI:29035"/>
        <label>1</label>
    </ligand>
</feature>
<feature type="binding site" evidence="1">
    <location>
        <position position="361"/>
    </location>
    <ligand>
        <name>Mn(2+)</name>
        <dbReference type="ChEBI" id="CHEBI:29035"/>
        <label>2</label>
    </ligand>
</feature>
<organism>
    <name type="scientific">Mycobacterium sp. (strain JLS)</name>
    <dbReference type="NCBI Taxonomy" id="164757"/>
    <lineage>
        <taxon>Bacteria</taxon>
        <taxon>Bacillati</taxon>
        <taxon>Actinomycetota</taxon>
        <taxon>Actinomycetes</taxon>
        <taxon>Mycobacteriales</taxon>
        <taxon>Mycobacteriaceae</taxon>
        <taxon>Mycobacterium</taxon>
    </lineage>
</organism>
<keyword id="KW-0031">Aminopeptidase</keyword>
<keyword id="KW-0963">Cytoplasm</keyword>
<keyword id="KW-0378">Hydrolase</keyword>
<keyword id="KW-0464">Manganese</keyword>
<keyword id="KW-0479">Metal-binding</keyword>
<keyword id="KW-0645">Protease</keyword>
<dbReference type="EC" id="3.4.11.1" evidence="1"/>
<dbReference type="EC" id="3.4.11.10" evidence="1"/>
<dbReference type="EMBL" id="CP000580">
    <property type="protein sequence ID" value="ABN99099.1"/>
    <property type="molecule type" value="Genomic_DNA"/>
</dbReference>
<dbReference type="SMR" id="A3Q1S2"/>
<dbReference type="KEGG" id="mjl:Mjls_3321"/>
<dbReference type="HOGENOM" id="CLU_013734_2_0_11"/>
<dbReference type="GO" id="GO:0005737">
    <property type="term" value="C:cytoplasm"/>
    <property type="evidence" value="ECO:0007669"/>
    <property type="project" value="UniProtKB-SubCell"/>
</dbReference>
<dbReference type="GO" id="GO:0030145">
    <property type="term" value="F:manganese ion binding"/>
    <property type="evidence" value="ECO:0007669"/>
    <property type="project" value="UniProtKB-UniRule"/>
</dbReference>
<dbReference type="GO" id="GO:0070006">
    <property type="term" value="F:metalloaminopeptidase activity"/>
    <property type="evidence" value="ECO:0007669"/>
    <property type="project" value="InterPro"/>
</dbReference>
<dbReference type="GO" id="GO:0006508">
    <property type="term" value="P:proteolysis"/>
    <property type="evidence" value="ECO:0007669"/>
    <property type="project" value="UniProtKB-KW"/>
</dbReference>
<dbReference type="CDD" id="cd00433">
    <property type="entry name" value="Peptidase_M17"/>
    <property type="match status" value="1"/>
</dbReference>
<dbReference type="Gene3D" id="3.40.220.10">
    <property type="entry name" value="Leucine Aminopeptidase, subunit E, domain 1"/>
    <property type="match status" value="1"/>
</dbReference>
<dbReference type="Gene3D" id="3.40.630.10">
    <property type="entry name" value="Zn peptidases"/>
    <property type="match status" value="1"/>
</dbReference>
<dbReference type="HAMAP" id="MF_00181">
    <property type="entry name" value="Cytosol_peptidase_M17"/>
    <property type="match status" value="1"/>
</dbReference>
<dbReference type="InterPro" id="IPR011356">
    <property type="entry name" value="Leucine_aapep/pepB"/>
</dbReference>
<dbReference type="InterPro" id="IPR043472">
    <property type="entry name" value="Macro_dom-like"/>
</dbReference>
<dbReference type="InterPro" id="IPR000819">
    <property type="entry name" value="Peptidase_M17_C"/>
</dbReference>
<dbReference type="InterPro" id="IPR023042">
    <property type="entry name" value="Peptidase_M17_leu_NH2_pept"/>
</dbReference>
<dbReference type="InterPro" id="IPR008283">
    <property type="entry name" value="Peptidase_M17_N"/>
</dbReference>
<dbReference type="NCBIfam" id="NF002073">
    <property type="entry name" value="PRK00913.1-2"/>
    <property type="match status" value="1"/>
</dbReference>
<dbReference type="PANTHER" id="PTHR11963:SF23">
    <property type="entry name" value="CYTOSOL AMINOPEPTIDASE"/>
    <property type="match status" value="1"/>
</dbReference>
<dbReference type="PANTHER" id="PTHR11963">
    <property type="entry name" value="LEUCINE AMINOPEPTIDASE-RELATED"/>
    <property type="match status" value="1"/>
</dbReference>
<dbReference type="Pfam" id="PF00883">
    <property type="entry name" value="Peptidase_M17"/>
    <property type="match status" value="1"/>
</dbReference>
<dbReference type="Pfam" id="PF02789">
    <property type="entry name" value="Peptidase_M17_N"/>
    <property type="match status" value="1"/>
</dbReference>
<dbReference type="PRINTS" id="PR00481">
    <property type="entry name" value="LAMNOPPTDASE"/>
</dbReference>
<dbReference type="SUPFAM" id="SSF52949">
    <property type="entry name" value="Macro domain-like"/>
    <property type="match status" value="1"/>
</dbReference>
<dbReference type="SUPFAM" id="SSF53187">
    <property type="entry name" value="Zn-dependent exopeptidases"/>
    <property type="match status" value="1"/>
</dbReference>
<dbReference type="PROSITE" id="PS00631">
    <property type="entry name" value="CYTOSOL_AP"/>
    <property type="match status" value="1"/>
</dbReference>
<gene>
    <name evidence="1" type="primary">pepA</name>
    <name type="ordered locus">Mjls_3321</name>
</gene>
<comment type="function">
    <text evidence="1">Presumably involved in the processing and regular turnover of intracellular proteins. Catalyzes the removal of unsubstituted N-terminal amino acids from various peptides.</text>
</comment>
<comment type="catalytic activity">
    <reaction evidence="1">
        <text>Release of an N-terminal amino acid, Xaa-|-Yaa-, in which Xaa is preferably Leu, but may be other amino acids including Pro although not Arg or Lys, and Yaa may be Pro. Amino acid amides and methyl esters are also readily hydrolyzed, but rates on arylamides are exceedingly low.</text>
        <dbReference type="EC" id="3.4.11.1"/>
    </reaction>
</comment>
<comment type="catalytic activity">
    <reaction evidence="1">
        <text>Release of an N-terminal amino acid, preferentially leucine, but not glutamic or aspartic acids.</text>
        <dbReference type="EC" id="3.4.11.10"/>
    </reaction>
</comment>
<comment type="cofactor">
    <cofactor evidence="1">
        <name>Mn(2+)</name>
        <dbReference type="ChEBI" id="CHEBI:29035"/>
    </cofactor>
    <text evidence="1">Binds 2 manganese ions per subunit.</text>
</comment>
<comment type="subcellular location">
    <subcellularLocation>
        <location evidence="1">Cytoplasm</location>
    </subcellularLocation>
</comment>
<comment type="similarity">
    <text evidence="1">Belongs to the peptidase M17 family.</text>
</comment>
<evidence type="ECO:0000255" key="1">
    <source>
        <dbReference type="HAMAP-Rule" id="MF_00181"/>
    </source>
</evidence>